<comment type="function">
    <text evidence="2 3 4 5 8">Amidase; part of the Fusarium detoxification of benzoxazolinone cluster 2 (FDB2) involved in the degradation of benzoxazolinones produced by the host plant (PubMed:19302487, PubMed:26808652). Maize, wheat, and rye produce the 2 benzoxazinone phytoanticipins 2,4-dihy-droxy-7-methoxy-1,4-benzoxazin-3-one (DIMBOA) and 2,4-dihydroxy-1,4-benzoxazin-3-one (DIBOA) that, due to their inherent instability once released, spontaneously degrade to the more stable corresponding benzoxazolinones, 6-methoxy-2-benzoxazolinone (MBOA) and 2-benzoxazolinone (BOA), respectively (PubMed:11876429). The first step in the detoxification of benzoxazolinones involves the hydrolysis of the cyclic ester bond of benzoxazolinones by the FDB1 cluster gamma-lactamase MBL1 to aminophenols (PubMed:12788712, PubMed:26808652). MBL1 is able to convert BOA into 2-aminophenol (2-AP), as well as MBOA into 5-methoxy-2-aminophenol (2-AMP) (PubMed:12788712, PubMed:26808652). The FDB2 cluster N-malonyltransferase FDB2/NAT1 then metabolizes aminophenols via N-malonylation to non-toxic malonamic acids (PubMed:12788712, PubMed:19302487). FDB2/NAT1 converts 2-AP into N-(2-hydroxyphenyl) malonamic acid (HPMA) and 2-AMP into N-(2-hydroxy-4-methoxyphenyl) malonamic acid (HMPMA) (PubMed:12788712, PubMed:19302487). The duplicated dienlactone hydrolases DLH1 and DLH2 may provide redundant function for hydrolyzing the lactone moiety in the BOA molecule (Probable). The roles of the amidases an other enzymes encoded by the 2 FDB clusters have not been identified so far (Probable).</text>
</comment>
<comment type="catalytic activity">
    <reaction evidence="8">
        <text>a monocarboxylic acid amide + H2O = a monocarboxylate + NH4(+)</text>
        <dbReference type="Rhea" id="RHEA:12020"/>
        <dbReference type="ChEBI" id="CHEBI:15377"/>
        <dbReference type="ChEBI" id="CHEBI:28938"/>
        <dbReference type="ChEBI" id="CHEBI:35757"/>
        <dbReference type="ChEBI" id="CHEBI:83628"/>
        <dbReference type="EC" id="3.5.1.4"/>
    </reaction>
</comment>
<comment type="pathway">
    <text evidence="8">Xenobiotic degradation.</text>
</comment>
<comment type="induction">
    <text evidence="5">Expression is not induced in response to 2-benzoxazolinone (BOA) exposure.</text>
</comment>
<comment type="miscellaneous">
    <text evidence="8">Fusarium verticillioides possesses 2 unlinked loci, FDB1 and FDB2, necessary for detoxification of antimicrobial compounds produced by maize, including 2-benzoxazolinone (BOA) (Probable). The FDB2 cluster arose as a duplication of the FDB1 cluster with rearrangement and expansion by incorporating additional genes (Probable).</text>
</comment>
<comment type="similarity">
    <text evidence="7">Belongs to the amidase family.</text>
</comment>
<protein>
    <recommendedName>
        <fullName evidence="6">Amidase 2</fullName>
        <ecNumber evidence="8">3.5.1.4</ecNumber>
    </recommendedName>
    <alternativeName>
        <fullName evidence="6">Fusarium detoxification of benzoxazolinone cluster 2 protein AMD2</fullName>
        <shortName evidence="6">FDB2 cluster protein AMD2</shortName>
    </alternativeName>
</protein>
<dbReference type="EC" id="3.5.1.4" evidence="8"/>
<dbReference type="EMBL" id="CM000580">
    <property type="protein sequence ID" value="EWG54411.1"/>
    <property type="molecule type" value="Genomic_DNA"/>
</dbReference>
<dbReference type="RefSeq" id="XP_018760602.1">
    <property type="nucleotide sequence ID" value="XM_018906570.1"/>
</dbReference>
<dbReference type="SMR" id="W7MTI6"/>
<dbReference type="STRING" id="334819.W7MTI6"/>
<dbReference type="GeneID" id="30074189"/>
<dbReference type="KEGG" id="fvr:FVEG_17313"/>
<dbReference type="VEuPathDB" id="FungiDB:FVEG_17313"/>
<dbReference type="eggNOG" id="KOG1212">
    <property type="taxonomic scope" value="Eukaryota"/>
</dbReference>
<dbReference type="OrthoDB" id="48570at110618"/>
<dbReference type="Proteomes" id="UP000009096">
    <property type="component" value="Chromosome 3"/>
</dbReference>
<dbReference type="GO" id="GO:0016787">
    <property type="term" value="F:hydrolase activity"/>
    <property type="evidence" value="ECO:0007669"/>
    <property type="project" value="UniProtKB-KW"/>
</dbReference>
<dbReference type="Gene3D" id="3.90.1300.10">
    <property type="entry name" value="Amidase signature (AS) domain"/>
    <property type="match status" value="1"/>
</dbReference>
<dbReference type="InterPro" id="IPR023631">
    <property type="entry name" value="Amidase_dom"/>
</dbReference>
<dbReference type="InterPro" id="IPR036928">
    <property type="entry name" value="AS_sf"/>
</dbReference>
<dbReference type="PANTHER" id="PTHR46072:SF2">
    <property type="entry name" value="AMIDASE (EUROFUNG)"/>
    <property type="match status" value="1"/>
</dbReference>
<dbReference type="PANTHER" id="PTHR46072">
    <property type="entry name" value="AMIDASE-RELATED-RELATED"/>
    <property type="match status" value="1"/>
</dbReference>
<dbReference type="Pfam" id="PF01425">
    <property type="entry name" value="Amidase"/>
    <property type="match status" value="1"/>
</dbReference>
<dbReference type="PIRSF" id="PIRSF001221">
    <property type="entry name" value="Amidase_fungi"/>
    <property type="match status" value="1"/>
</dbReference>
<dbReference type="SUPFAM" id="SSF75304">
    <property type="entry name" value="Amidase signature (AS) enzymes"/>
    <property type="match status" value="1"/>
</dbReference>
<evidence type="ECO:0000250" key="1">
    <source>
        <dbReference type="UniProtKB" id="P97612"/>
    </source>
</evidence>
<evidence type="ECO:0000269" key="2">
    <source>
    </source>
</evidence>
<evidence type="ECO:0000269" key="3">
    <source>
    </source>
</evidence>
<evidence type="ECO:0000269" key="4">
    <source>
    </source>
</evidence>
<evidence type="ECO:0000269" key="5">
    <source>
    </source>
</evidence>
<evidence type="ECO:0000303" key="6">
    <source>
    </source>
</evidence>
<evidence type="ECO:0000305" key="7"/>
<evidence type="ECO:0000305" key="8">
    <source>
    </source>
</evidence>
<gene>
    <name evidence="6" type="primary">AMD2</name>
    <name type="ORF">FVEG_17313</name>
</gene>
<organism>
    <name type="scientific">Gibberella moniliformis (strain M3125 / FGSC 7600)</name>
    <name type="common">Maize ear and stalk rot fungus</name>
    <name type="synonym">Fusarium verticillioides</name>
    <dbReference type="NCBI Taxonomy" id="334819"/>
    <lineage>
        <taxon>Eukaryota</taxon>
        <taxon>Fungi</taxon>
        <taxon>Dikarya</taxon>
        <taxon>Ascomycota</taxon>
        <taxon>Pezizomycotina</taxon>
        <taxon>Sordariomycetes</taxon>
        <taxon>Hypocreomycetidae</taxon>
        <taxon>Hypocreales</taxon>
        <taxon>Nectriaceae</taxon>
        <taxon>Fusarium</taxon>
        <taxon>Fusarium fujikuroi species complex</taxon>
    </lineage>
</organism>
<keyword id="KW-0378">Hydrolase</keyword>
<keyword id="KW-1185">Reference proteome</keyword>
<sequence>MTTSKDTTKVHKPWTEVVTEKRALRDARIDKHLKSDIKFPSDGISFETVDIDVLTSLLRDRKVSAVEVIHAHSRACEAQKQTNCLTEICFDDALEQATQLDEFQQEHGQLMGPLHGVPVTVKDQFNIRGLDSTLGYVAKAFSPAESDAPLVQTLKKLGAVIIAKTNLPQSIMWCETNNPLWGLTTHPEDPKLTPGGSSGGEAAMLLMGASIIGWGTDIGGSIRIPCHMNGLWGLKPSSGRLSYRGVEVTLEGQQHIPSAVGPMARSLSCLKLVTKLAIEAEPWAIDPQLPPVPWRDGIFQATSTRPLSVFRDLVTKLEAAGHEVIEWDSSLNSSIIDIMDGYYSADGGEDIRSAVSAGGEPFIPQIQAFVNRGEPISVFEYWQLNKRKIAIQEAYHDMWDNKRSPTSRPVDVLLVPTMPHTAVPHGSCRWTGYTKIFNLLDYTALTFPAGKAPRGENDGSFWEHVPRNEVDAWNQRLYDPVTMGGRHVGLQIVGRRFEEEKVPIVLKPKCIF</sequence>
<reference key="1">
    <citation type="journal article" date="2010" name="Nature">
        <title>Comparative genomics reveals mobile pathogenicity chromosomes in Fusarium.</title>
        <authorList>
            <person name="Ma L.-J."/>
            <person name="van der Does H.C."/>
            <person name="Borkovich K.A."/>
            <person name="Coleman J.J."/>
            <person name="Daboussi M.-J."/>
            <person name="Di Pietro A."/>
            <person name="Dufresne M."/>
            <person name="Freitag M."/>
            <person name="Grabherr M."/>
            <person name="Henrissat B."/>
            <person name="Houterman P.M."/>
            <person name="Kang S."/>
            <person name="Shim W.-B."/>
            <person name="Woloshuk C."/>
            <person name="Xie X."/>
            <person name="Xu J.-R."/>
            <person name="Antoniw J."/>
            <person name="Baker S.E."/>
            <person name="Bluhm B.H."/>
            <person name="Breakspear A."/>
            <person name="Brown D.W."/>
            <person name="Butchko R.A.E."/>
            <person name="Chapman S."/>
            <person name="Coulson R."/>
            <person name="Coutinho P.M."/>
            <person name="Danchin E.G.J."/>
            <person name="Diener A."/>
            <person name="Gale L.R."/>
            <person name="Gardiner D.M."/>
            <person name="Goff S."/>
            <person name="Hammond-Kosack K.E."/>
            <person name="Hilburn K."/>
            <person name="Hua-Van A."/>
            <person name="Jonkers W."/>
            <person name="Kazan K."/>
            <person name="Kodira C.D."/>
            <person name="Koehrsen M."/>
            <person name="Kumar L."/>
            <person name="Lee Y.-H."/>
            <person name="Li L."/>
            <person name="Manners J.M."/>
            <person name="Miranda-Saavedra D."/>
            <person name="Mukherjee M."/>
            <person name="Park G."/>
            <person name="Park J."/>
            <person name="Park S.-Y."/>
            <person name="Proctor R.H."/>
            <person name="Regev A."/>
            <person name="Ruiz-Roldan M.C."/>
            <person name="Sain D."/>
            <person name="Sakthikumar S."/>
            <person name="Sykes S."/>
            <person name="Schwartz D.C."/>
            <person name="Turgeon B.G."/>
            <person name="Wapinski I."/>
            <person name="Yoder O."/>
            <person name="Young S."/>
            <person name="Zeng Q."/>
            <person name="Zhou S."/>
            <person name="Galagan J."/>
            <person name="Cuomo C.A."/>
            <person name="Kistler H.C."/>
            <person name="Rep M."/>
        </authorList>
    </citation>
    <scope>NUCLEOTIDE SEQUENCE [LARGE SCALE GENOMIC DNA]</scope>
    <source>
        <strain>M3125 / FGSC 7600</strain>
    </source>
</reference>
<reference key="2">
    <citation type="journal article" date="2002" name="Mol. Plant Microbe Interact.">
        <title>Fdb1 and Fdb2, Fusarium verticillioides loci necessary for detoxification of preformed antimicrobials from corn.</title>
        <authorList>
            <person name="Glenn A.E."/>
            <person name="Gold S.E."/>
            <person name="Bacon C.W."/>
        </authorList>
    </citation>
    <scope>FUNCTION</scope>
</reference>
<reference key="3">
    <citation type="journal article" date="2003" name="Appl. Environ. Microbiol.">
        <title>Identification of intermediate and branch metabolites resulting from biotransformation of 2-benzoxazolinone by Fusarium verticillioides.</title>
        <authorList>
            <person name="Glenn A.E."/>
            <person name="Meredith F.I."/>
            <person name="Morrison W.H. III"/>
            <person name="Bacon C.W."/>
        </authorList>
    </citation>
    <scope>FUNCTION</scope>
</reference>
<reference key="4">
    <citation type="journal article" date="2009" name="J. Appl. Microbiol.">
        <title>FDB2 encodes a member of the arylamine N-acetyltransferase family and is necessary for biotransformation of benzoxazolinones by Fusarium verticillioides.</title>
        <authorList>
            <person name="Glenn A.E."/>
            <person name="Bacon C.W."/>
        </authorList>
    </citation>
    <scope>FUNCTION</scope>
</reference>
<reference key="5">
    <citation type="journal article" date="2016" name="PLoS ONE">
        <title>Two horizontally transferred xenobiotic resistance gene clusters associated with detoxification of benzoxazolinones by Fusarium species.</title>
        <authorList>
            <person name="Glenn A.E."/>
            <person name="Davis C.B."/>
            <person name="Gao M."/>
            <person name="Gold S.E."/>
            <person name="Mitchell T.R."/>
            <person name="Proctor R.H."/>
            <person name="Stewart J.E."/>
            <person name="Snook M.E."/>
        </authorList>
    </citation>
    <scope>FUNCTION</scope>
    <scope>INDUCTION</scope>
    <scope>PATHWAY</scope>
</reference>
<name>AMD2_GIBM7</name>
<feature type="chain" id="PRO_0000454598" description="Amidase 2">
    <location>
        <begin position="1"/>
        <end position="512"/>
    </location>
</feature>
<feature type="active site" description="Charge relay system" evidence="1">
    <location>
        <position position="122"/>
    </location>
</feature>
<feature type="active site" description="Charge relay system" evidence="1">
    <location>
        <position position="197"/>
    </location>
</feature>
<feature type="active site" description="Acyl-ester intermediate" evidence="1">
    <location>
        <position position="221"/>
    </location>
</feature>
<feature type="binding site" evidence="1">
    <location>
        <position position="197"/>
    </location>
    <ligand>
        <name>substrate</name>
    </ligand>
</feature>
<feature type="binding site" evidence="1">
    <location>
        <begin position="218"/>
        <end position="221"/>
    </location>
    <ligand>
        <name>substrate</name>
    </ligand>
</feature>
<accession>W7MTI6</accession>
<proteinExistence type="evidence at transcript level"/>